<comment type="function">
    <text evidence="1">Stabilizer subunit of the dolichol-phosphate mannose (DPM) synthase complex; tethers catalytic subunit DPM1 to the endoplasmic reticulum.</text>
</comment>
<comment type="pathway">
    <text>Protein modification; protein glycosylation.</text>
</comment>
<comment type="subunit">
    <text evidence="2">Component of the dolichol-phosphate mannose (DPM) synthase complex composed of DPM1, DPM2 and DPM3; within the complex, associates with DPM1 via its C-terminal domain and with DPM2 via its N-terminal portion. This interaction stabilizes DPM1 protein.</text>
</comment>
<comment type="subcellular location">
    <subcellularLocation>
        <location evidence="1">Endoplasmic reticulum membrane</location>
        <topology evidence="1">Multi-pass membrane protein</topology>
    </subcellularLocation>
</comment>
<comment type="similarity">
    <text evidence="4">Belongs to the DPM3 family.</text>
</comment>
<gene>
    <name type="primary">Dpm3</name>
</gene>
<reference key="1">
    <citation type="journal article" date="2005" name="Science">
        <title>The transcriptional landscape of the mammalian genome.</title>
        <authorList>
            <person name="Carninci P."/>
            <person name="Kasukawa T."/>
            <person name="Katayama S."/>
            <person name="Gough J."/>
            <person name="Frith M.C."/>
            <person name="Maeda N."/>
            <person name="Oyama R."/>
            <person name="Ravasi T."/>
            <person name="Lenhard B."/>
            <person name="Wells C."/>
            <person name="Kodzius R."/>
            <person name="Shimokawa K."/>
            <person name="Bajic V.B."/>
            <person name="Brenner S.E."/>
            <person name="Batalov S."/>
            <person name="Forrest A.R."/>
            <person name="Zavolan M."/>
            <person name="Davis M.J."/>
            <person name="Wilming L.G."/>
            <person name="Aidinis V."/>
            <person name="Allen J.E."/>
            <person name="Ambesi-Impiombato A."/>
            <person name="Apweiler R."/>
            <person name="Aturaliya R.N."/>
            <person name="Bailey T.L."/>
            <person name="Bansal M."/>
            <person name="Baxter L."/>
            <person name="Beisel K.W."/>
            <person name="Bersano T."/>
            <person name="Bono H."/>
            <person name="Chalk A.M."/>
            <person name="Chiu K.P."/>
            <person name="Choudhary V."/>
            <person name="Christoffels A."/>
            <person name="Clutterbuck D.R."/>
            <person name="Crowe M.L."/>
            <person name="Dalla E."/>
            <person name="Dalrymple B.P."/>
            <person name="de Bono B."/>
            <person name="Della Gatta G."/>
            <person name="di Bernardo D."/>
            <person name="Down T."/>
            <person name="Engstrom P."/>
            <person name="Fagiolini M."/>
            <person name="Faulkner G."/>
            <person name="Fletcher C.F."/>
            <person name="Fukushima T."/>
            <person name="Furuno M."/>
            <person name="Futaki S."/>
            <person name="Gariboldi M."/>
            <person name="Georgii-Hemming P."/>
            <person name="Gingeras T.R."/>
            <person name="Gojobori T."/>
            <person name="Green R.E."/>
            <person name="Gustincich S."/>
            <person name="Harbers M."/>
            <person name="Hayashi Y."/>
            <person name="Hensch T.K."/>
            <person name="Hirokawa N."/>
            <person name="Hill D."/>
            <person name="Huminiecki L."/>
            <person name="Iacono M."/>
            <person name="Ikeo K."/>
            <person name="Iwama A."/>
            <person name="Ishikawa T."/>
            <person name="Jakt M."/>
            <person name="Kanapin A."/>
            <person name="Katoh M."/>
            <person name="Kawasawa Y."/>
            <person name="Kelso J."/>
            <person name="Kitamura H."/>
            <person name="Kitano H."/>
            <person name="Kollias G."/>
            <person name="Krishnan S.P."/>
            <person name="Kruger A."/>
            <person name="Kummerfeld S.K."/>
            <person name="Kurochkin I.V."/>
            <person name="Lareau L.F."/>
            <person name="Lazarevic D."/>
            <person name="Lipovich L."/>
            <person name="Liu J."/>
            <person name="Liuni S."/>
            <person name="McWilliam S."/>
            <person name="Madan Babu M."/>
            <person name="Madera M."/>
            <person name="Marchionni L."/>
            <person name="Matsuda H."/>
            <person name="Matsuzawa S."/>
            <person name="Miki H."/>
            <person name="Mignone F."/>
            <person name="Miyake S."/>
            <person name="Morris K."/>
            <person name="Mottagui-Tabar S."/>
            <person name="Mulder N."/>
            <person name="Nakano N."/>
            <person name="Nakauchi H."/>
            <person name="Ng P."/>
            <person name="Nilsson R."/>
            <person name="Nishiguchi S."/>
            <person name="Nishikawa S."/>
            <person name="Nori F."/>
            <person name="Ohara O."/>
            <person name="Okazaki Y."/>
            <person name="Orlando V."/>
            <person name="Pang K.C."/>
            <person name="Pavan W.J."/>
            <person name="Pavesi G."/>
            <person name="Pesole G."/>
            <person name="Petrovsky N."/>
            <person name="Piazza S."/>
            <person name="Reed J."/>
            <person name="Reid J.F."/>
            <person name="Ring B.Z."/>
            <person name="Ringwald M."/>
            <person name="Rost B."/>
            <person name="Ruan Y."/>
            <person name="Salzberg S.L."/>
            <person name="Sandelin A."/>
            <person name="Schneider C."/>
            <person name="Schoenbach C."/>
            <person name="Sekiguchi K."/>
            <person name="Semple C.A."/>
            <person name="Seno S."/>
            <person name="Sessa L."/>
            <person name="Sheng Y."/>
            <person name="Shibata Y."/>
            <person name="Shimada H."/>
            <person name="Shimada K."/>
            <person name="Silva D."/>
            <person name="Sinclair B."/>
            <person name="Sperling S."/>
            <person name="Stupka E."/>
            <person name="Sugiura K."/>
            <person name="Sultana R."/>
            <person name="Takenaka Y."/>
            <person name="Taki K."/>
            <person name="Tammoja K."/>
            <person name="Tan S.L."/>
            <person name="Tang S."/>
            <person name="Taylor M.S."/>
            <person name="Tegner J."/>
            <person name="Teichmann S.A."/>
            <person name="Ueda H.R."/>
            <person name="van Nimwegen E."/>
            <person name="Verardo R."/>
            <person name="Wei C.L."/>
            <person name="Yagi K."/>
            <person name="Yamanishi H."/>
            <person name="Zabarovsky E."/>
            <person name="Zhu S."/>
            <person name="Zimmer A."/>
            <person name="Hide W."/>
            <person name="Bult C."/>
            <person name="Grimmond S.M."/>
            <person name="Teasdale R.D."/>
            <person name="Liu E.T."/>
            <person name="Brusic V."/>
            <person name="Quackenbush J."/>
            <person name="Wahlestedt C."/>
            <person name="Mattick J.S."/>
            <person name="Hume D.A."/>
            <person name="Kai C."/>
            <person name="Sasaki D."/>
            <person name="Tomaru Y."/>
            <person name="Fukuda S."/>
            <person name="Kanamori-Katayama M."/>
            <person name="Suzuki M."/>
            <person name="Aoki J."/>
            <person name="Arakawa T."/>
            <person name="Iida J."/>
            <person name="Imamura K."/>
            <person name="Itoh M."/>
            <person name="Kato T."/>
            <person name="Kawaji H."/>
            <person name="Kawagashira N."/>
            <person name="Kawashima T."/>
            <person name="Kojima M."/>
            <person name="Kondo S."/>
            <person name="Konno H."/>
            <person name="Nakano K."/>
            <person name="Ninomiya N."/>
            <person name="Nishio T."/>
            <person name="Okada M."/>
            <person name="Plessy C."/>
            <person name="Shibata K."/>
            <person name="Shiraki T."/>
            <person name="Suzuki S."/>
            <person name="Tagami M."/>
            <person name="Waki K."/>
            <person name="Watahiki A."/>
            <person name="Okamura-Oho Y."/>
            <person name="Suzuki H."/>
            <person name="Kawai J."/>
            <person name="Hayashizaki Y."/>
        </authorList>
    </citation>
    <scope>NUCLEOTIDE SEQUENCE [LARGE SCALE MRNA]</scope>
    <source>
        <strain>C57BL/6J</strain>
        <tissue>Embryo</tissue>
    </source>
</reference>
<reference key="2">
    <citation type="journal article" date="2004" name="Genome Res.">
        <title>The status, quality, and expansion of the NIH full-length cDNA project: the Mammalian Gene Collection (MGC).</title>
        <authorList>
            <consortium name="The MGC Project Team"/>
        </authorList>
    </citation>
    <scope>NUCLEOTIDE SEQUENCE [LARGE SCALE MRNA]</scope>
    <source>
        <tissue>Mammary gland</tissue>
    </source>
</reference>
<reference key="3">
    <citation type="journal article" date="2010" name="Cell">
        <title>A tissue-specific atlas of mouse protein phosphorylation and expression.</title>
        <authorList>
            <person name="Huttlin E.L."/>
            <person name="Jedrychowski M.P."/>
            <person name="Elias J.E."/>
            <person name="Goswami T."/>
            <person name="Rad R."/>
            <person name="Beausoleil S.A."/>
            <person name="Villen J."/>
            <person name="Haas W."/>
            <person name="Sowa M.E."/>
            <person name="Gygi S.P."/>
        </authorList>
    </citation>
    <scope>IDENTIFICATION BY MASS SPECTROMETRY [LARGE SCALE ANALYSIS]</scope>
    <source>
        <tissue>Brain</tissue>
        <tissue>Kidney</tissue>
        <tissue>Liver</tissue>
        <tissue>Lung</tissue>
        <tissue>Pancreas</tissue>
        <tissue>Spleen</tissue>
        <tissue>Testis</tissue>
    </source>
</reference>
<evidence type="ECO:0000250" key="1"/>
<evidence type="ECO:0000250" key="2">
    <source>
        <dbReference type="UniProtKB" id="Q9P2X0"/>
    </source>
</evidence>
<evidence type="ECO:0000255" key="3"/>
<evidence type="ECO:0000305" key="4"/>
<proteinExistence type="evidence at protein level"/>
<keyword id="KW-0256">Endoplasmic reticulum</keyword>
<keyword id="KW-0472">Membrane</keyword>
<keyword id="KW-1185">Reference proteome</keyword>
<keyword id="KW-0812">Transmembrane</keyword>
<keyword id="KW-1133">Transmembrane helix</keyword>
<accession>Q9D1Q4</accession>
<sequence length="92" mass="10139">MTKLTQWLWGLALLGSAWAALTMGALGLELPFPCREVLWPLPAYLLVSAGCYALGTVGYRVATFHDCEDAARELQSQIVEARADLARRGLRF</sequence>
<dbReference type="EMBL" id="AK003223">
    <property type="protein sequence ID" value="BAB22652.1"/>
    <property type="molecule type" value="mRNA"/>
</dbReference>
<dbReference type="EMBL" id="BC037761">
    <property type="status" value="NOT_ANNOTATED_CDS"/>
    <property type="molecule type" value="mRNA"/>
</dbReference>
<dbReference type="CCDS" id="CCDS38487.1"/>
<dbReference type="RefSeq" id="NP_081043.1">
    <property type="nucleotide sequence ID" value="NM_026767.4"/>
</dbReference>
<dbReference type="RefSeq" id="XP_006502046.1">
    <property type="nucleotide sequence ID" value="XM_006501983.2"/>
</dbReference>
<dbReference type="SMR" id="Q9D1Q4"/>
<dbReference type="BioGRID" id="212928">
    <property type="interactions" value="3"/>
</dbReference>
<dbReference type="FunCoup" id="Q9D1Q4">
    <property type="interactions" value="626"/>
</dbReference>
<dbReference type="STRING" id="10090.ENSMUSP00000103086"/>
<dbReference type="PhosphoSitePlus" id="Q9D1Q4"/>
<dbReference type="SwissPalm" id="Q9D1Q4"/>
<dbReference type="PaxDb" id="10090-ENSMUSP00000103086"/>
<dbReference type="PeptideAtlas" id="Q9D1Q4"/>
<dbReference type="ProteomicsDB" id="279765"/>
<dbReference type="Pumba" id="Q9D1Q4"/>
<dbReference type="Antibodypedia" id="3056">
    <property type="antibodies" value="34 antibodies from 20 providers"/>
</dbReference>
<dbReference type="Ensembl" id="ENSMUST00000040824.2">
    <property type="protein sequence ID" value="ENSMUSP00000040860.2"/>
    <property type="gene ID" value="ENSMUSG00000042737.10"/>
</dbReference>
<dbReference type="Ensembl" id="ENSMUST00000107462.8">
    <property type="protein sequence ID" value="ENSMUSP00000103086.2"/>
    <property type="gene ID" value="ENSMUSG00000042737.10"/>
</dbReference>
<dbReference type="GeneID" id="68563"/>
<dbReference type="KEGG" id="mmu:68563"/>
<dbReference type="UCSC" id="uc008pym.2">
    <property type="organism name" value="mouse"/>
</dbReference>
<dbReference type="AGR" id="MGI:1915813"/>
<dbReference type="CTD" id="54344"/>
<dbReference type="MGI" id="MGI:1915813">
    <property type="gene designation" value="Dpm3"/>
</dbReference>
<dbReference type="VEuPathDB" id="HostDB:ENSMUSG00000042737"/>
<dbReference type="eggNOG" id="KOG4841">
    <property type="taxonomic scope" value="Eukaryota"/>
</dbReference>
<dbReference type="GeneTree" id="ENSGT00390000008892"/>
<dbReference type="HOGENOM" id="CLU_150782_0_1_1"/>
<dbReference type="InParanoid" id="Q9D1Q4"/>
<dbReference type="OMA" id="KLMQWLF"/>
<dbReference type="OrthoDB" id="2014333at2759"/>
<dbReference type="PhylomeDB" id="Q9D1Q4"/>
<dbReference type="TreeFam" id="TF300274"/>
<dbReference type="Reactome" id="R-MMU-162699">
    <property type="pathway name" value="Synthesis of dolichyl-phosphate mannose"/>
</dbReference>
<dbReference type="UniPathway" id="UPA00378"/>
<dbReference type="BioGRID-ORCS" id="68563">
    <property type="hits" value="10 hits in 78 CRISPR screens"/>
</dbReference>
<dbReference type="ChiTaRS" id="Dpm3">
    <property type="organism name" value="mouse"/>
</dbReference>
<dbReference type="PRO" id="PR:Q9D1Q4"/>
<dbReference type="Proteomes" id="UP000000589">
    <property type="component" value="Chromosome 3"/>
</dbReference>
<dbReference type="RNAct" id="Q9D1Q4">
    <property type="molecule type" value="protein"/>
</dbReference>
<dbReference type="Bgee" id="ENSMUSG00000042737">
    <property type="expression patterns" value="Expressed in intestinal villus and 121 other cell types or tissues"/>
</dbReference>
<dbReference type="GO" id="GO:0033185">
    <property type="term" value="C:dolichol-phosphate-mannose synthase complex"/>
    <property type="evidence" value="ECO:0000250"/>
    <property type="project" value="HGNC-UCL"/>
</dbReference>
<dbReference type="GO" id="GO:0005789">
    <property type="term" value="C:endoplasmic reticulum membrane"/>
    <property type="evidence" value="ECO:0000250"/>
    <property type="project" value="HGNC-UCL"/>
</dbReference>
<dbReference type="GO" id="GO:0008047">
    <property type="term" value="F:enzyme activator activity"/>
    <property type="evidence" value="ECO:0000250"/>
    <property type="project" value="HGNC-UCL"/>
</dbReference>
<dbReference type="GO" id="GO:0019348">
    <property type="term" value="P:dolichol metabolic process"/>
    <property type="evidence" value="ECO:0007669"/>
    <property type="project" value="Ensembl"/>
</dbReference>
<dbReference type="GO" id="GO:0006506">
    <property type="term" value="P:GPI anchor biosynthetic process"/>
    <property type="evidence" value="ECO:0007669"/>
    <property type="project" value="Ensembl"/>
</dbReference>
<dbReference type="GO" id="GO:0006486">
    <property type="term" value="P:protein glycosylation"/>
    <property type="evidence" value="ECO:0007669"/>
    <property type="project" value="UniProtKB-UniPathway"/>
</dbReference>
<dbReference type="GO" id="GO:0031647">
    <property type="term" value="P:regulation of protein stability"/>
    <property type="evidence" value="ECO:0007669"/>
    <property type="project" value="Ensembl"/>
</dbReference>
<dbReference type="InterPro" id="IPR013174">
    <property type="entry name" value="DPM3"/>
</dbReference>
<dbReference type="PANTHER" id="PTHR16433">
    <property type="entry name" value="DOLICHOL-PHOSPHATE MANNOSYLTRANSFERASE SUBUNIT 3"/>
    <property type="match status" value="1"/>
</dbReference>
<dbReference type="PANTHER" id="PTHR16433:SF0">
    <property type="entry name" value="DOLICHOL-PHOSPHATE MANNOSYLTRANSFERASE SUBUNIT 3"/>
    <property type="match status" value="1"/>
</dbReference>
<dbReference type="Pfam" id="PF08285">
    <property type="entry name" value="DPM3"/>
    <property type="match status" value="1"/>
</dbReference>
<name>DPM3_MOUSE</name>
<feature type="chain" id="PRO_0000195001" description="Dolichol-phosphate mannosyltransferase subunit 3">
    <location>
        <begin position="1"/>
        <end position="92"/>
    </location>
</feature>
<feature type="transmembrane region" description="Helical" evidence="3">
    <location>
        <begin position="8"/>
        <end position="28"/>
    </location>
</feature>
<feature type="transmembrane region" description="Helical" evidence="3">
    <location>
        <begin position="37"/>
        <end position="57"/>
    </location>
</feature>
<organism>
    <name type="scientific">Mus musculus</name>
    <name type="common">Mouse</name>
    <dbReference type="NCBI Taxonomy" id="10090"/>
    <lineage>
        <taxon>Eukaryota</taxon>
        <taxon>Metazoa</taxon>
        <taxon>Chordata</taxon>
        <taxon>Craniata</taxon>
        <taxon>Vertebrata</taxon>
        <taxon>Euteleostomi</taxon>
        <taxon>Mammalia</taxon>
        <taxon>Eutheria</taxon>
        <taxon>Euarchontoglires</taxon>
        <taxon>Glires</taxon>
        <taxon>Rodentia</taxon>
        <taxon>Myomorpha</taxon>
        <taxon>Muroidea</taxon>
        <taxon>Muridae</taxon>
        <taxon>Murinae</taxon>
        <taxon>Mus</taxon>
        <taxon>Mus</taxon>
    </lineage>
</organism>
<protein>
    <recommendedName>
        <fullName>Dolichol-phosphate mannosyltransferase subunit 3</fullName>
    </recommendedName>
    <alternativeName>
        <fullName>Dolichol-phosphate mannose synthase subunit 3</fullName>
        <shortName>DPM synthase subunit 3</shortName>
    </alternativeName>
    <alternativeName>
        <fullName>Dolichyl-phosphate beta-D-mannosyltransferase subunit 3</fullName>
    </alternativeName>
    <alternativeName>
        <fullName>Mannose-P-dolichol synthase subunit 3</fullName>
        <shortName>MPD synthase subunit 3</shortName>
    </alternativeName>
</protein>